<evidence type="ECO:0000255" key="1">
    <source>
        <dbReference type="HAMAP-Rule" id="MF_00522"/>
    </source>
</evidence>
<evidence type="ECO:0007829" key="2">
    <source>
        <dbReference type="PDB" id="8WM6"/>
    </source>
</evidence>
<protein>
    <recommendedName>
        <fullName evidence="1">Photosystem I reaction center subunit IX</fullName>
    </recommendedName>
    <alternativeName>
        <fullName evidence="1">PSI-J</fullName>
    </alternativeName>
</protein>
<keyword id="KW-0002">3D-structure</keyword>
<keyword id="KW-0150">Chloroplast</keyword>
<keyword id="KW-0472">Membrane</keyword>
<keyword id="KW-0602">Photosynthesis</keyword>
<keyword id="KW-0603">Photosystem I</keyword>
<keyword id="KW-0934">Plastid</keyword>
<keyword id="KW-0793">Thylakoid</keyword>
<keyword id="KW-0812">Transmembrane</keyword>
<keyword id="KW-1133">Transmembrane helix</keyword>
<proteinExistence type="evidence at protein level"/>
<organism>
    <name type="scientific">Rhodomonas salina</name>
    <name type="common">Cryptomonas salina</name>
    <dbReference type="NCBI Taxonomy" id="52970"/>
    <lineage>
        <taxon>Eukaryota</taxon>
        <taxon>Cryptophyceae</taxon>
        <taxon>Pyrenomonadales</taxon>
        <taxon>Pyrenomonadaceae</taxon>
        <taxon>Rhodomonas</taxon>
    </lineage>
</organism>
<gene>
    <name evidence="1" type="primary">psaJ</name>
</gene>
<sequence>MDSNFLKYLSTAPVLFTVWLSFTASFIIEANRFFPDMLYFPM</sequence>
<accession>A6MVU6</accession>
<reference key="1">
    <citation type="journal article" date="2007" name="Mol. Biol. Evol.">
        <title>Plastid genome sequence of the cryptophyte alga Rhodomonas salina CCMP1319: lateral transfer of putative DNA replication machinery and a test of chromist plastid phylogeny.</title>
        <authorList>
            <person name="Khan H."/>
            <person name="Parks N."/>
            <person name="Kozera C."/>
            <person name="Curtis B.A."/>
            <person name="Parsons B.J."/>
            <person name="Bowman S."/>
            <person name="Archibald J.M."/>
        </authorList>
    </citation>
    <scope>NUCLEOTIDE SEQUENCE [LARGE SCALE GENOMIC DNA]</scope>
    <source>
        <strain>CCMP1319 / NEPCC76 / CS-174</strain>
    </source>
</reference>
<dbReference type="EMBL" id="EF508371">
    <property type="protein sequence ID" value="ABO70834.1"/>
    <property type="molecule type" value="Genomic_DNA"/>
</dbReference>
<dbReference type="RefSeq" id="YP_001293525.1">
    <property type="nucleotide sequence ID" value="NC_009573.1"/>
</dbReference>
<dbReference type="PDB" id="8WM6">
    <property type="method" value="EM"/>
    <property type="resolution" value="2.70 A"/>
    <property type="chains" value="J=1-42"/>
</dbReference>
<dbReference type="PDB" id="8WMJ">
    <property type="method" value="EM"/>
    <property type="resolution" value="3.00 A"/>
    <property type="chains" value="J=1-42"/>
</dbReference>
<dbReference type="PDB" id="8WMV">
    <property type="method" value="EM"/>
    <property type="resolution" value="2.94 A"/>
    <property type="chains" value="J=1-42"/>
</dbReference>
<dbReference type="PDB" id="8WMW">
    <property type="method" value="EM"/>
    <property type="resolution" value="3.30 A"/>
    <property type="chains" value="J=1-42"/>
</dbReference>
<dbReference type="PDBsum" id="8WM6"/>
<dbReference type="PDBsum" id="8WMJ"/>
<dbReference type="PDBsum" id="8WMV"/>
<dbReference type="PDBsum" id="8WMW"/>
<dbReference type="EMDB" id="EMD-37642"/>
<dbReference type="EMDB" id="EMD-37654"/>
<dbReference type="EMDB" id="EMD-37659"/>
<dbReference type="EMDB" id="EMD-37660"/>
<dbReference type="SMR" id="A6MVU6"/>
<dbReference type="GeneID" id="5228570"/>
<dbReference type="GO" id="GO:0009535">
    <property type="term" value="C:chloroplast thylakoid membrane"/>
    <property type="evidence" value="ECO:0007669"/>
    <property type="project" value="UniProtKB-SubCell"/>
</dbReference>
<dbReference type="GO" id="GO:0009522">
    <property type="term" value="C:photosystem I"/>
    <property type="evidence" value="ECO:0007669"/>
    <property type="project" value="UniProtKB-KW"/>
</dbReference>
<dbReference type="GO" id="GO:0015979">
    <property type="term" value="P:photosynthesis"/>
    <property type="evidence" value="ECO:0007669"/>
    <property type="project" value="UniProtKB-UniRule"/>
</dbReference>
<dbReference type="Gene3D" id="1.20.5.510">
    <property type="entry name" value="Single helix bin"/>
    <property type="match status" value="1"/>
</dbReference>
<dbReference type="HAMAP" id="MF_00522">
    <property type="entry name" value="PSI_PsaJ"/>
    <property type="match status" value="1"/>
</dbReference>
<dbReference type="InterPro" id="IPR002615">
    <property type="entry name" value="PSI_PsaJ"/>
</dbReference>
<dbReference type="InterPro" id="IPR036062">
    <property type="entry name" value="PSI_PsaJ_sf"/>
</dbReference>
<dbReference type="PANTHER" id="PTHR36082">
    <property type="match status" value="1"/>
</dbReference>
<dbReference type="PANTHER" id="PTHR36082:SF2">
    <property type="entry name" value="PHOTOSYSTEM I REACTION CENTER SUBUNIT IX"/>
    <property type="match status" value="1"/>
</dbReference>
<dbReference type="Pfam" id="PF01701">
    <property type="entry name" value="PSI_PsaJ"/>
    <property type="match status" value="1"/>
</dbReference>
<dbReference type="SUPFAM" id="SSF81544">
    <property type="entry name" value="Subunit IX of photosystem I reaction centre, PsaJ"/>
    <property type="match status" value="1"/>
</dbReference>
<name>PSAJ_RHDSA</name>
<feature type="chain" id="PRO_0000354172" description="Photosystem I reaction center subunit IX">
    <location>
        <begin position="1"/>
        <end position="42"/>
    </location>
</feature>
<feature type="transmembrane region" description="Helical" evidence="1">
    <location>
        <begin position="8"/>
        <end position="28"/>
    </location>
</feature>
<feature type="helix" evidence="2">
    <location>
        <begin position="3"/>
        <end position="9"/>
    </location>
</feature>
<feature type="helix" evidence="2">
    <location>
        <begin position="12"/>
        <end position="33"/>
    </location>
</feature>
<comment type="function">
    <text evidence="1">May help in the organization of the PsaE and PsaF subunits.</text>
</comment>
<comment type="subcellular location">
    <subcellularLocation>
        <location evidence="1">Plastid</location>
        <location evidence="1">Chloroplast thylakoid membrane</location>
        <topology evidence="1">Single-pass membrane protein</topology>
    </subcellularLocation>
</comment>
<comment type="similarity">
    <text evidence="1">Belongs to the PsaJ family.</text>
</comment>
<geneLocation type="chloroplast"/>